<reference key="1">
    <citation type="submission" date="2007-12" db="EMBL/GenBank/DDBJ databases">
        <title>Complete sequence of Methylobacterium extorquens PA1.</title>
        <authorList>
            <consortium name="US DOE Joint Genome Institute"/>
            <person name="Copeland A."/>
            <person name="Lucas S."/>
            <person name="Lapidus A."/>
            <person name="Barry K."/>
            <person name="Glavina del Rio T."/>
            <person name="Dalin E."/>
            <person name="Tice H."/>
            <person name="Pitluck S."/>
            <person name="Saunders E."/>
            <person name="Brettin T."/>
            <person name="Bruce D."/>
            <person name="Detter J.C."/>
            <person name="Han C."/>
            <person name="Schmutz J."/>
            <person name="Larimer F."/>
            <person name="Land M."/>
            <person name="Hauser L."/>
            <person name="Kyrpides N."/>
            <person name="Kim E."/>
            <person name="Marx C."/>
            <person name="Richardson P."/>
        </authorList>
    </citation>
    <scope>NUCLEOTIDE SEQUENCE [LARGE SCALE GENOMIC DNA]</scope>
    <source>
        <strain>PA1</strain>
    </source>
</reference>
<gene>
    <name evidence="1" type="primary">apt</name>
    <name type="ordered locus">Mext_0600</name>
</gene>
<sequence length="181" mass="19520">MEARRHSALKDSVRSIPDYPKPGIIFRDITTLLSDPRSFRRAVDSLVHPYAGGRIDQVAGIEARGFILGGAVAHQLSSGFVPIRKKGKLPHKTVSTAYALEYGTDEIEIHVDAIKPGDRVILVDDLIATGGTATAAVNLLRQLGAEVVAACFVIDLPEIGGAQRLRDLGVTVRTLMEFEGH</sequence>
<dbReference type="EC" id="2.4.2.7" evidence="1"/>
<dbReference type="EMBL" id="CP000908">
    <property type="protein sequence ID" value="ABY29014.1"/>
    <property type="molecule type" value="Genomic_DNA"/>
</dbReference>
<dbReference type="RefSeq" id="WP_003604529.1">
    <property type="nucleotide sequence ID" value="NC_010172.1"/>
</dbReference>
<dbReference type="SMR" id="A9W0A8"/>
<dbReference type="KEGG" id="mex:Mext_0600"/>
<dbReference type="eggNOG" id="COG0503">
    <property type="taxonomic scope" value="Bacteria"/>
</dbReference>
<dbReference type="HOGENOM" id="CLU_063339_3_0_5"/>
<dbReference type="BioCyc" id="MEXT419610:MEXT_RS02965-MONOMER"/>
<dbReference type="UniPathway" id="UPA00588">
    <property type="reaction ID" value="UER00646"/>
</dbReference>
<dbReference type="GO" id="GO:0005737">
    <property type="term" value="C:cytoplasm"/>
    <property type="evidence" value="ECO:0007669"/>
    <property type="project" value="UniProtKB-SubCell"/>
</dbReference>
<dbReference type="GO" id="GO:0002055">
    <property type="term" value="F:adenine binding"/>
    <property type="evidence" value="ECO:0007669"/>
    <property type="project" value="TreeGrafter"/>
</dbReference>
<dbReference type="GO" id="GO:0003999">
    <property type="term" value="F:adenine phosphoribosyltransferase activity"/>
    <property type="evidence" value="ECO:0007669"/>
    <property type="project" value="UniProtKB-UniRule"/>
</dbReference>
<dbReference type="GO" id="GO:0016208">
    <property type="term" value="F:AMP binding"/>
    <property type="evidence" value="ECO:0007669"/>
    <property type="project" value="TreeGrafter"/>
</dbReference>
<dbReference type="GO" id="GO:0006168">
    <property type="term" value="P:adenine salvage"/>
    <property type="evidence" value="ECO:0007669"/>
    <property type="project" value="InterPro"/>
</dbReference>
<dbReference type="GO" id="GO:0044209">
    <property type="term" value="P:AMP salvage"/>
    <property type="evidence" value="ECO:0007669"/>
    <property type="project" value="UniProtKB-UniRule"/>
</dbReference>
<dbReference type="GO" id="GO:0006166">
    <property type="term" value="P:purine ribonucleoside salvage"/>
    <property type="evidence" value="ECO:0007669"/>
    <property type="project" value="UniProtKB-KW"/>
</dbReference>
<dbReference type="CDD" id="cd06223">
    <property type="entry name" value="PRTases_typeI"/>
    <property type="match status" value="1"/>
</dbReference>
<dbReference type="FunFam" id="3.40.50.2020:FF:000021">
    <property type="entry name" value="Adenine phosphoribosyltransferase"/>
    <property type="match status" value="1"/>
</dbReference>
<dbReference type="Gene3D" id="3.40.50.2020">
    <property type="match status" value="1"/>
</dbReference>
<dbReference type="HAMAP" id="MF_00004">
    <property type="entry name" value="Aden_phosphoribosyltr"/>
    <property type="match status" value="1"/>
</dbReference>
<dbReference type="InterPro" id="IPR005764">
    <property type="entry name" value="Ade_phspho_trans"/>
</dbReference>
<dbReference type="InterPro" id="IPR000836">
    <property type="entry name" value="PRibTrfase_dom"/>
</dbReference>
<dbReference type="InterPro" id="IPR029057">
    <property type="entry name" value="PRTase-like"/>
</dbReference>
<dbReference type="InterPro" id="IPR050054">
    <property type="entry name" value="UPRTase/APRTase"/>
</dbReference>
<dbReference type="NCBIfam" id="TIGR01090">
    <property type="entry name" value="apt"/>
    <property type="match status" value="1"/>
</dbReference>
<dbReference type="NCBIfam" id="NF002634">
    <property type="entry name" value="PRK02304.1-3"/>
    <property type="match status" value="1"/>
</dbReference>
<dbReference type="NCBIfam" id="NF002636">
    <property type="entry name" value="PRK02304.1-5"/>
    <property type="match status" value="1"/>
</dbReference>
<dbReference type="PANTHER" id="PTHR32315">
    <property type="entry name" value="ADENINE PHOSPHORIBOSYLTRANSFERASE"/>
    <property type="match status" value="1"/>
</dbReference>
<dbReference type="PANTHER" id="PTHR32315:SF3">
    <property type="entry name" value="ADENINE PHOSPHORIBOSYLTRANSFERASE"/>
    <property type="match status" value="1"/>
</dbReference>
<dbReference type="Pfam" id="PF00156">
    <property type="entry name" value="Pribosyltran"/>
    <property type="match status" value="1"/>
</dbReference>
<dbReference type="SUPFAM" id="SSF53271">
    <property type="entry name" value="PRTase-like"/>
    <property type="match status" value="1"/>
</dbReference>
<dbReference type="PROSITE" id="PS00103">
    <property type="entry name" value="PUR_PYR_PR_TRANSFER"/>
    <property type="match status" value="1"/>
</dbReference>
<evidence type="ECO:0000255" key="1">
    <source>
        <dbReference type="HAMAP-Rule" id="MF_00004"/>
    </source>
</evidence>
<proteinExistence type="inferred from homology"/>
<organism>
    <name type="scientific">Methylorubrum extorquens (strain PA1)</name>
    <name type="common">Methylobacterium extorquens</name>
    <dbReference type="NCBI Taxonomy" id="419610"/>
    <lineage>
        <taxon>Bacteria</taxon>
        <taxon>Pseudomonadati</taxon>
        <taxon>Pseudomonadota</taxon>
        <taxon>Alphaproteobacteria</taxon>
        <taxon>Hyphomicrobiales</taxon>
        <taxon>Methylobacteriaceae</taxon>
        <taxon>Methylorubrum</taxon>
    </lineage>
</organism>
<feature type="chain" id="PRO_1000116177" description="Adenine phosphoribosyltransferase">
    <location>
        <begin position="1"/>
        <end position="181"/>
    </location>
</feature>
<comment type="function">
    <text evidence="1">Catalyzes a salvage reaction resulting in the formation of AMP, that is energically less costly than de novo synthesis.</text>
</comment>
<comment type="catalytic activity">
    <reaction evidence="1">
        <text>AMP + diphosphate = 5-phospho-alpha-D-ribose 1-diphosphate + adenine</text>
        <dbReference type="Rhea" id="RHEA:16609"/>
        <dbReference type="ChEBI" id="CHEBI:16708"/>
        <dbReference type="ChEBI" id="CHEBI:33019"/>
        <dbReference type="ChEBI" id="CHEBI:58017"/>
        <dbReference type="ChEBI" id="CHEBI:456215"/>
        <dbReference type="EC" id="2.4.2.7"/>
    </reaction>
</comment>
<comment type="pathway">
    <text evidence="1">Purine metabolism; AMP biosynthesis via salvage pathway; AMP from adenine: step 1/1.</text>
</comment>
<comment type="subunit">
    <text evidence="1">Homodimer.</text>
</comment>
<comment type="subcellular location">
    <subcellularLocation>
        <location evidence="1">Cytoplasm</location>
    </subcellularLocation>
</comment>
<comment type="similarity">
    <text evidence="1">Belongs to the purine/pyrimidine phosphoribosyltransferase family.</text>
</comment>
<keyword id="KW-0963">Cytoplasm</keyword>
<keyword id="KW-0328">Glycosyltransferase</keyword>
<keyword id="KW-0660">Purine salvage</keyword>
<keyword id="KW-0808">Transferase</keyword>
<protein>
    <recommendedName>
        <fullName evidence="1">Adenine phosphoribosyltransferase</fullName>
        <shortName evidence="1">APRT</shortName>
        <ecNumber evidence="1">2.4.2.7</ecNumber>
    </recommendedName>
</protein>
<accession>A9W0A8</accession>
<name>APT_METEP</name>